<feature type="signal peptide" evidence="4">
    <location>
        <begin position="1"/>
        <end position="21"/>
    </location>
</feature>
<feature type="propeptide" id="PRO_0000414299" evidence="5">
    <location>
        <begin position="22"/>
        <end position="46"/>
    </location>
</feature>
<feature type="peptide" id="PRO_0000414300" description="Toxin GTx1-15" evidence="5">
    <location>
        <begin position="47"/>
        <end position="80"/>
    </location>
</feature>
<feature type="modified residue" description="Phenylalanine amide" evidence="1 2">
    <location>
        <position position="80"/>
    </location>
</feature>
<feature type="disulfide bond" evidence="3">
    <location>
        <begin position="48"/>
        <end position="63"/>
    </location>
</feature>
<feature type="disulfide bond" evidence="3">
    <location>
        <begin position="55"/>
        <end position="69"/>
    </location>
</feature>
<feature type="disulfide bond" evidence="3">
    <location>
        <begin position="62"/>
        <end position="76"/>
    </location>
</feature>
<comment type="function">
    <text evidence="1 2 5 6">Potent voltage-gated sodium channel blocker (By similarity). Potently inhibits the voltage-gated sodium channels Nav1.7/SCN9A (IC(50)=0.58-10 nM) (By similarity). Shows a moderate activity on Nav1.1/SCN1A (IC(50)=6 nM), Nav1.2/SCN2A (IC(50)=5-128 nM), Nav1.3/SCN3A (IC(50)=20.3-170 nM), and Nav1.6/SCN8A (IC(50)=17-20.1 nM) (By similarity) (PubMed:29703751). Shows an unclear inhibition of Nav1.4/SCN4A (IC(50)=200 nM to &gt;10 uM), Nav1.5/SCN5A (IC(50)=140 nM to &gt;10 uM) and Nav1.8/SCN10A (IC(50)=68-12200 nM) (By similarity) (PubMed:29703751). Weakly blocks the low voltage-gated calcium channels Cav3.1/CACNA1G (30% inhibition of the peak current by 9.8 nM of the toxin) (PubMed:21740921). It shows moderate affinity for lipid bilayers (PubMed:29703751).</text>
</comment>
<comment type="subcellular location">
    <subcellularLocation>
        <location evidence="5">Secreted</location>
    </subcellularLocation>
</comment>
<comment type="tissue specificity">
    <text evidence="10">Expressed by the venom gland.</text>
</comment>
<comment type="domain">
    <text evidence="1">The presence of a 'disulfide through disulfide knot' structurally defines this protein as a knottin.</text>
</comment>
<comment type="domain">
    <text evidence="1">This toxin is amphipathic in nature with a hydrophobic face on one side of the molecule (composed of residues 51-Phe-Met-52 and 73-His--Phe-80) and a hydrophilic (mostly cationic) face on the opposite side (composed of residues 56-Ile--Lys-61 and 64-Arg--Pro-65).</text>
</comment>
<comment type="mass spectrometry">
    <text>Monoisotopic mass (after thiol reduction).</text>
</comment>
<comment type="miscellaneous">
    <text evidence="9">The primary structure of the mature peptide is identical to that of GpTx-1 from Grammostola porteri (AC P0DL72) and Gtx1-15 from Paraphysa scrofa (AC P0DL73).</text>
</comment>
<comment type="similarity">
    <text evidence="9">Belongs to the neurotoxin 10 (Hwtx-1) family. 08 (Gtx1-15) subfamily.</text>
</comment>
<accession>P0DJA9</accession>
<accession>M5AYC6</accession>
<keyword id="KW-0027">Amidation</keyword>
<keyword id="KW-0108">Calcium channel impairing toxin</keyword>
<keyword id="KW-0903">Direct protein sequencing</keyword>
<keyword id="KW-1015">Disulfide bond</keyword>
<keyword id="KW-0872">Ion channel impairing toxin</keyword>
<keyword id="KW-0960">Knottin</keyword>
<keyword id="KW-0528">Neurotoxin</keyword>
<keyword id="KW-0964">Secreted</keyword>
<keyword id="KW-0732">Signal</keyword>
<keyword id="KW-0800">Toxin</keyword>
<keyword id="KW-1218">Voltage-gated calcium channel impairing toxin</keyword>
<keyword id="KW-0738">Voltage-gated sodium channel impairing toxin</keyword>
<evidence type="ECO:0000250" key="1">
    <source>
        <dbReference type="UniProtKB" id="P0DL72"/>
    </source>
</evidence>
<evidence type="ECO:0000250" key="2">
    <source>
        <dbReference type="UniProtKB" id="P0DL73"/>
    </source>
</evidence>
<evidence type="ECO:0000250" key="3">
    <source>
        <dbReference type="UniProtKB" id="P83471"/>
    </source>
</evidence>
<evidence type="ECO:0000255" key="4"/>
<evidence type="ECO:0000269" key="5">
    <source>
    </source>
</evidence>
<evidence type="ECO:0000269" key="6">
    <source>
    </source>
</evidence>
<evidence type="ECO:0000303" key="7">
    <source>
    </source>
</evidence>
<evidence type="ECO:0000303" key="8">
    <source>
    </source>
</evidence>
<evidence type="ECO:0000305" key="9"/>
<evidence type="ECO:0000305" key="10">
    <source>
    </source>
</evidence>
<protein>
    <recommendedName>
        <fullName evidence="2 7">Toxin GTx1-15</fullName>
    </recommendedName>
    <alternativeName>
        <fullName evidence="9">Beta/omega-theraphotoxin-Gr2a</fullName>
        <shortName evidence="9">Beta/omega-TRTX-Gr2a</shortName>
    </alternativeName>
    <alternativeName>
        <fullName evidence="1">GpTx-1</fullName>
    </alternativeName>
    <alternativeName>
        <fullName evidence="8">GpTx-I</fullName>
    </alternativeName>
</protein>
<proteinExistence type="evidence at protein level"/>
<dbReference type="EMBL" id="AB201016">
    <property type="protein sequence ID" value="BAN13512.1"/>
    <property type="molecule type" value="mRNA"/>
</dbReference>
<dbReference type="SMR" id="P0DJA9"/>
<dbReference type="ArachnoServer" id="AS001910">
    <property type="toxin name" value="omega-theraphotoxin-Gr2a"/>
</dbReference>
<dbReference type="GO" id="GO:0005576">
    <property type="term" value="C:extracellular region"/>
    <property type="evidence" value="ECO:0007669"/>
    <property type="project" value="UniProtKB-SubCell"/>
</dbReference>
<dbReference type="GO" id="GO:0005246">
    <property type="term" value="F:calcium channel regulator activity"/>
    <property type="evidence" value="ECO:0007669"/>
    <property type="project" value="UniProtKB-KW"/>
</dbReference>
<dbReference type="GO" id="GO:0008200">
    <property type="term" value="F:ion channel inhibitor activity"/>
    <property type="evidence" value="ECO:0007669"/>
    <property type="project" value="InterPro"/>
</dbReference>
<dbReference type="GO" id="GO:0017080">
    <property type="term" value="F:sodium channel regulator activity"/>
    <property type="evidence" value="ECO:0007669"/>
    <property type="project" value="UniProtKB-KW"/>
</dbReference>
<dbReference type="GO" id="GO:0090729">
    <property type="term" value="F:toxin activity"/>
    <property type="evidence" value="ECO:0007669"/>
    <property type="project" value="UniProtKB-KW"/>
</dbReference>
<dbReference type="InterPro" id="IPR011696">
    <property type="entry name" value="Huwentoxin-1"/>
</dbReference>
<dbReference type="InterPro" id="IPR013140">
    <property type="entry name" value="Huwentoxin_CS1"/>
</dbReference>
<dbReference type="Pfam" id="PF07740">
    <property type="entry name" value="Toxin_12"/>
    <property type="match status" value="1"/>
</dbReference>
<dbReference type="SUPFAM" id="SSF57059">
    <property type="entry name" value="omega toxin-like"/>
    <property type="match status" value="1"/>
</dbReference>
<dbReference type="PROSITE" id="PS60021">
    <property type="entry name" value="HWTX_1"/>
    <property type="match status" value="1"/>
</dbReference>
<sequence>MKTSVVFVIAGLALLSVACYASELKEQSSINEVLSTIFHFEQPEERDCLGFMRKCIPDNDKCCRPNLVCSRTHKWCKYVFGK</sequence>
<name>TX15_GRARO</name>
<organism>
    <name type="scientific">Grammostola rosea</name>
    <name type="common">Chilean rose tarantula</name>
    <name type="synonym">Grammostola spatulata</name>
    <dbReference type="NCBI Taxonomy" id="432528"/>
    <lineage>
        <taxon>Eukaryota</taxon>
        <taxon>Metazoa</taxon>
        <taxon>Ecdysozoa</taxon>
        <taxon>Arthropoda</taxon>
        <taxon>Chelicerata</taxon>
        <taxon>Arachnida</taxon>
        <taxon>Araneae</taxon>
        <taxon>Mygalomorphae</taxon>
        <taxon>Theraphosidae</taxon>
        <taxon>Grammostola</taxon>
    </lineage>
</organism>
<reference key="1">
    <citation type="journal article" date="2011" name="Toxicon">
        <title>Characterization of voltage-dependent calcium channel blocking peptides from the venom of the tarantula Grammostola rosea.</title>
        <authorList>
            <person name="Ono S."/>
            <person name="Kimura T."/>
            <person name="Kubo T."/>
        </authorList>
    </citation>
    <scope>NUCLEOTIDE SEQUENCE [MRNA]</scope>
    <scope>PROTEIN SEQUENCE OF 47-80</scope>
    <scope>FUNCTION</scope>
    <scope>MASS SPECTROMETRY</scope>
    <scope>SUBCELLULAR LOCATION</scope>
    <source>
        <tissue>Venom</tissue>
        <tissue>Venom gland</tissue>
    </source>
</reference>
<reference key="2">
    <citation type="journal article" date="2018" name="J. Biol. Chem.">
        <title>Gating modifier toxins isolated from spider venom: modulation of voltage-gated sodium channels and the role of lipid membranes.</title>
        <authorList>
            <person name="Agwa A.J."/>
            <person name="Peigneur S."/>
            <person name="Chow C.Y."/>
            <person name="Lawrence N."/>
            <person name="Craik D.J."/>
            <person name="Tytgat J."/>
            <person name="King G.F."/>
            <person name="Henriques S.T."/>
            <person name="Schroeder C.I."/>
        </authorList>
    </citation>
    <scope>FUNCTION</scope>
    <scope>SYNTHESIS</scope>
</reference>